<evidence type="ECO:0000255" key="1">
    <source>
        <dbReference type="HAMAP-Rule" id="MF_01849"/>
    </source>
</evidence>
<evidence type="ECO:0000255" key="2">
    <source>
        <dbReference type="PROSITE-ProRule" id="PRU01266"/>
    </source>
</evidence>
<evidence type="ECO:0000305" key="3"/>
<organism>
    <name type="scientific">Mycobacterium tuberculosis (strain ATCC 25618 / H37Rv)</name>
    <dbReference type="NCBI Taxonomy" id="83332"/>
    <lineage>
        <taxon>Bacteria</taxon>
        <taxon>Bacillati</taxon>
        <taxon>Actinomycetota</taxon>
        <taxon>Actinomycetes</taxon>
        <taxon>Mycobacteriales</taxon>
        <taxon>Mycobacteriaceae</taxon>
        <taxon>Mycobacterium</taxon>
        <taxon>Mycobacterium tuberculosis complex</taxon>
    </lineage>
</organism>
<dbReference type="EC" id="2.1.1.192" evidence="1"/>
<dbReference type="EMBL" id="AL123456">
    <property type="protein sequence ID" value="CCP45681.1"/>
    <property type="status" value="ALT_FRAME"/>
    <property type="molecule type" value="Genomic_DNA"/>
</dbReference>
<dbReference type="EMBL" id="AL123456">
    <property type="protein sequence ID" value="CCP45682.1"/>
    <property type="status" value="ALT_FRAME"/>
    <property type="molecule type" value="Genomic_DNA"/>
</dbReference>
<dbReference type="PIR" id="B70924">
    <property type="entry name" value="B70924"/>
</dbReference>
<dbReference type="PIR" id="C70924">
    <property type="entry name" value="C70924"/>
</dbReference>
<dbReference type="SMR" id="P9WH15"/>
<dbReference type="FunCoup" id="P9WH15">
    <property type="interactions" value="235"/>
</dbReference>
<dbReference type="STRING" id="83332.Rv2879c"/>
<dbReference type="PaxDb" id="83332-Rv2879c"/>
<dbReference type="TubercuList" id="Rv2879c"/>
<dbReference type="TubercuList" id="Rv2880c"/>
<dbReference type="eggNOG" id="COG0820">
    <property type="taxonomic scope" value="Bacteria"/>
</dbReference>
<dbReference type="InParanoid" id="P9WH15"/>
<dbReference type="Proteomes" id="UP000001584">
    <property type="component" value="Chromosome"/>
</dbReference>
<dbReference type="GO" id="GO:0005737">
    <property type="term" value="C:cytoplasm"/>
    <property type="evidence" value="ECO:0007669"/>
    <property type="project" value="UniProtKB-SubCell"/>
</dbReference>
<dbReference type="GO" id="GO:0009274">
    <property type="term" value="C:peptidoglycan-based cell wall"/>
    <property type="evidence" value="ECO:0007005"/>
    <property type="project" value="MTBBASE"/>
</dbReference>
<dbReference type="GO" id="GO:0005886">
    <property type="term" value="C:plasma membrane"/>
    <property type="evidence" value="ECO:0007005"/>
    <property type="project" value="MTBBASE"/>
</dbReference>
<dbReference type="GO" id="GO:0051539">
    <property type="term" value="F:4 iron, 4 sulfur cluster binding"/>
    <property type="evidence" value="ECO:0007669"/>
    <property type="project" value="UniProtKB-UniRule"/>
</dbReference>
<dbReference type="GO" id="GO:0046872">
    <property type="term" value="F:metal ion binding"/>
    <property type="evidence" value="ECO:0007669"/>
    <property type="project" value="UniProtKB-KW"/>
</dbReference>
<dbReference type="GO" id="GO:0070040">
    <property type="term" value="F:rRNA (adenine(2503)-C2-)-methyltransferase activity"/>
    <property type="evidence" value="ECO:0007669"/>
    <property type="project" value="UniProtKB-UniRule"/>
</dbReference>
<dbReference type="GO" id="GO:0019843">
    <property type="term" value="F:rRNA binding"/>
    <property type="evidence" value="ECO:0007669"/>
    <property type="project" value="UniProtKB-UniRule"/>
</dbReference>
<dbReference type="GO" id="GO:0002935">
    <property type="term" value="F:tRNA (adenine(37)-C2)-methyltransferase activity"/>
    <property type="evidence" value="ECO:0007669"/>
    <property type="project" value="UniProtKB-UniRule"/>
</dbReference>
<dbReference type="GO" id="GO:0000049">
    <property type="term" value="F:tRNA binding"/>
    <property type="evidence" value="ECO:0007669"/>
    <property type="project" value="UniProtKB-UniRule"/>
</dbReference>
<dbReference type="GO" id="GO:0070475">
    <property type="term" value="P:rRNA base methylation"/>
    <property type="evidence" value="ECO:0000318"/>
    <property type="project" value="GO_Central"/>
</dbReference>
<dbReference type="GO" id="GO:0030488">
    <property type="term" value="P:tRNA methylation"/>
    <property type="evidence" value="ECO:0000318"/>
    <property type="project" value="GO_Central"/>
</dbReference>
<dbReference type="CDD" id="cd01335">
    <property type="entry name" value="Radical_SAM"/>
    <property type="match status" value="1"/>
</dbReference>
<dbReference type="FunFam" id="1.10.150.530:FF:000004">
    <property type="entry name" value="Probable dual-specificity RNA methyltransferase RlmN"/>
    <property type="match status" value="1"/>
</dbReference>
<dbReference type="FunFam" id="3.20.20.70:FF:000014">
    <property type="entry name" value="Probable dual-specificity RNA methyltransferase RlmN"/>
    <property type="match status" value="1"/>
</dbReference>
<dbReference type="Gene3D" id="1.10.150.530">
    <property type="match status" value="1"/>
</dbReference>
<dbReference type="Gene3D" id="3.20.20.70">
    <property type="entry name" value="Aldolase class I"/>
    <property type="match status" value="1"/>
</dbReference>
<dbReference type="HAMAP" id="MF_01849">
    <property type="entry name" value="RNA_methyltr_RlmN"/>
    <property type="match status" value="1"/>
</dbReference>
<dbReference type="InterPro" id="IPR013785">
    <property type="entry name" value="Aldolase_TIM"/>
</dbReference>
<dbReference type="InterPro" id="IPR040072">
    <property type="entry name" value="Methyltransferase_A"/>
</dbReference>
<dbReference type="InterPro" id="IPR027492">
    <property type="entry name" value="RNA_MTrfase_RlmN"/>
</dbReference>
<dbReference type="InterPro" id="IPR004383">
    <property type="entry name" value="rRNA_lsu_MTrfase_RlmN/Cfr"/>
</dbReference>
<dbReference type="InterPro" id="IPR007197">
    <property type="entry name" value="rSAM"/>
</dbReference>
<dbReference type="NCBIfam" id="TIGR00048">
    <property type="entry name" value="rRNA_mod_RlmN"/>
    <property type="match status" value="1"/>
</dbReference>
<dbReference type="PANTHER" id="PTHR30544">
    <property type="entry name" value="23S RRNA METHYLTRANSFERASE"/>
    <property type="match status" value="1"/>
</dbReference>
<dbReference type="PANTHER" id="PTHR30544:SF5">
    <property type="entry name" value="RADICAL SAM CORE DOMAIN-CONTAINING PROTEIN"/>
    <property type="match status" value="1"/>
</dbReference>
<dbReference type="Pfam" id="PF04055">
    <property type="entry name" value="Radical_SAM"/>
    <property type="match status" value="1"/>
</dbReference>
<dbReference type="PIRSF" id="PIRSF006004">
    <property type="entry name" value="CHP00048"/>
    <property type="match status" value="1"/>
</dbReference>
<dbReference type="SFLD" id="SFLDF00275">
    <property type="entry name" value="adenosine_C2_methyltransferase"/>
    <property type="match status" value="1"/>
</dbReference>
<dbReference type="SFLD" id="SFLDG01062">
    <property type="entry name" value="methyltransferase_(Class_A)"/>
    <property type="match status" value="1"/>
</dbReference>
<dbReference type="SUPFAM" id="SSF102114">
    <property type="entry name" value="Radical SAM enzymes"/>
    <property type="match status" value="1"/>
</dbReference>
<dbReference type="PROSITE" id="PS51918">
    <property type="entry name" value="RADICAL_SAM"/>
    <property type="match status" value="1"/>
</dbReference>
<comment type="function">
    <text evidence="1">Specifically methylates position 2 of adenine 2503 in 23S rRNA and position 2 of adenine 37 in tRNAs.</text>
</comment>
<comment type="catalytic activity">
    <reaction evidence="1">
        <text>adenosine(2503) in 23S rRNA + 2 reduced [2Fe-2S]-[ferredoxin] + 2 S-adenosyl-L-methionine = 2-methyladenosine(2503) in 23S rRNA + 5'-deoxyadenosine + L-methionine + 2 oxidized [2Fe-2S]-[ferredoxin] + S-adenosyl-L-homocysteine</text>
        <dbReference type="Rhea" id="RHEA:42916"/>
        <dbReference type="Rhea" id="RHEA-COMP:10000"/>
        <dbReference type="Rhea" id="RHEA-COMP:10001"/>
        <dbReference type="Rhea" id="RHEA-COMP:10152"/>
        <dbReference type="Rhea" id="RHEA-COMP:10282"/>
        <dbReference type="ChEBI" id="CHEBI:17319"/>
        <dbReference type="ChEBI" id="CHEBI:33737"/>
        <dbReference type="ChEBI" id="CHEBI:33738"/>
        <dbReference type="ChEBI" id="CHEBI:57844"/>
        <dbReference type="ChEBI" id="CHEBI:57856"/>
        <dbReference type="ChEBI" id="CHEBI:59789"/>
        <dbReference type="ChEBI" id="CHEBI:74411"/>
        <dbReference type="ChEBI" id="CHEBI:74497"/>
        <dbReference type="EC" id="2.1.1.192"/>
    </reaction>
</comment>
<comment type="catalytic activity">
    <reaction evidence="1">
        <text>adenosine(37) in tRNA + 2 reduced [2Fe-2S]-[ferredoxin] + 2 S-adenosyl-L-methionine = 2-methyladenosine(37) in tRNA + 5'-deoxyadenosine + L-methionine + 2 oxidized [2Fe-2S]-[ferredoxin] + S-adenosyl-L-homocysteine</text>
        <dbReference type="Rhea" id="RHEA:43332"/>
        <dbReference type="Rhea" id="RHEA-COMP:10000"/>
        <dbReference type="Rhea" id="RHEA-COMP:10001"/>
        <dbReference type="Rhea" id="RHEA-COMP:10162"/>
        <dbReference type="Rhea" id="RHEA-COMP:10485"/>
        <dbReference type="ChEBI" id="CHEBI:17319"/>
        <dbReference type="ChEBI" id="CHEBI:33737"/>
        <dbReference type="ChEBI" id="CHEBI:33738"/>
        <dbReference type="ChEBI" id="CHEBI:57844"/>
        <dbReference type="ChEBI" id="CHEBI:57856"/>
        <dbReference type="ChEBI" id="CHEBI:59789"/>
        <dbReference type="ChEBI" id="CHEBI:74411"/>
        <dbReference type="ChEBI" id="CHEBI:74497"/>
        <dbReference type="EC" id="2.1.1.192"/>
    </reaction>
</comment>
<comment type="cofactor">
    <cofactor evidence="1">
        <name>[4Fe-4S] cluster</name>
        <dbReference type="ChEBI" id="CHEBI:49883"/>
    </cofactor>
    <text evidence="1">Binds 1 [4Fe-4S] cluster. The cluster is coordinated with 3 cysteines and an exchangeable S-adenosyl-L-methionine.</text>
</comment>
<comment type="subcellular location">
    <subcellularLocation>
        <location evidence="1">Cytoplasm</location>
    </subcellularLocation>
</comment>
<comment type="miscellaneous">
    <text evidence="1">Reaction proceeds by a ping-pong mechanism involving intermediate methylation of a conserved cysteine residue.</text>
</comment>
<comment type="similarity">
    <text evidence="1">Belongs to the radical SAM superfamily. RlmN family.</text>
</comment>
<comment type="sequence caution" evidence="3">
    <conflict type="frameshift">
        <sequence resource="EMBL-CDS" id="CCP45681"/>
    </conflict>
    <text>Rv2880c and Rv2879c have been merged into one gene.</text>
</comment>
<comment type="sequence caution" evidence="3">
    <conflict type="frameshift">
        <sequence resource="EMBL-CDS" id="CCP45682"/>
    </conflict>
    <text>Rv2880c and Rv2879c have been merged into one gene.</text>
</comment>
<reference key="1">
    <citation type="journal article" date="1998" name="Nature">
        <title>Deciphering the biology of Mycobacterium tuberculosis from the complete genome sequence.</title>
        <authorList>
            <person name="Cole S.T."/>
            <person name="Brosch R."/>
            <person name="Parkhill J."/>
            <person name="Garnier T."/>
            <person name="Churcher C.M."/>
            <person name="Harris D.E."/>
            <person name="Gordon S.V."/>
            <person name="Eiglmeier K."/>
            <person name="Gas S."/>
            <person name="Barry C.E. III"/>
            <person name="Tekaia F."/>
            <person name="Badcock K."/>
            <person name="Basham D."/>
            <person name="Brown D."/>
            <person name="Chillingworth T."/>
            <person name="Connor R."/>
            <person name="Davies R.M."/>
            <person name="Devlin K."/>
            <person name="Feltwell T."/>
            <person name="Gentles S."/>
            <person name="Hamlin N."/>
            <person name="Holroyd S."/>
            <person name="Hornsby T."/>
            <person name="Jagels K."/>
            <person name="Krogh A."/>
            <person name="McLean J."/>
            <person name="Moule S."/>
            <person name="Murphy L.D."/>
            <person name="Oliver S."/>
            <person name="Osborne J."/>
            <person name="Quail M.A."/>
            <person name="Rajandream M.A."/>
            <person name="Rogers J."/>
            <person name="Rutter S."/>
            <person name="Seeger K."/>
            <person name="Skelton S."/>
            <person name="Squares S."/>
            <person name="Squares R."/>
            <person name="Sulston J.E."/>
            <person name="Taylor K."/>
            <person name="Whitehead S."/>
            <person name="Barrell B.G."/>
        </authorList>
    </citation>
    <scope>NUCLEOTIDE SEQUENCE [LARGE SCALE GENOMIC DNA]</scope>
    <source>
        <strain>ATCC 25618 / H37Rv</strain>
    </source>
</reference>
<protein>
    <recommendedName>
        <fullName evidence="1">Probable dual-specificity RNA methyltransferase RlmN</fullName>
        <ecNumber evidence="1">2.1.1.192</ecNumber>
    </recommendedName>
    <alternativeName>
        <fullName evidence="1">23S rRNA (adenine(2503)-C(2))-methyltransferase</fullName>
    </alternativeName>
    <alternativeName>
        <fullName evidence="1">23S rRNA m2A2503 methyltransferase</fullName>
    </alternativeName>
    <alternativeName>
        <fullName evidence="1">Ribosomal RNA large subunit methyltransferase N</fullName>
    </alternativeName>
    <alternativeName>
        <fullName evidence="1">tRNA (adenine(37)-C(2))-methyltransferase</fullName>
    </alternativeName>
    <alternativeName>
        <fullName evidence="1">tRNA m2A37 methyltransferase</fullName>
    </alternativeName>
</protein>
<keyword id="KW-0004">4Fe-4S</keyword>
<keyword id="KW-0963">Cytoplasm</keyword>
<keyword id="KW-1015">Disulfide bond</keyword>
<keyword id="KW-0408">Iron</keyword>
<keyword id="KW-0411">Iron-sulfur</keyword>
<keyword id="KW-0479">Metal-binding</keyword>
<keyword id="KW-0489">Methyltransferase</keyword>
<keyword id="KW-1185">Reference proteome</keyword>
<keyword id="KW-0698">rRNA processing</keyword>
<keyword id="KW-0949">S-adenosyl-L-methionine</keyword>
<keyword id="KW-0808">Transferase</keyword>
<keyword id="KW-0819">tRNA processing</keyword>
<gene>
    <name evidence="1" type="primary">rlmN</name>
    <name type="ordered locus">Rv2880c/Rv2879c</name>
    <name type="ORF">MTCY274.11c/MTCY274.10c</name>
</gene>
<sequence>MVPELMFDEPRPGRPPRHLADLDAAGRASAVAELGLPAFRAKQLAHQYYGRLIADPRQMTDLPAAVRDRIAGAMFPNLLTASADITCDAGQTRKTLWRAVDGTMFESVLMRYPRRNTVCISSQAGCGMACPFCATGQGGLTRNLSTAEILEQVRAGAAALRDDFGDRLSNVVFMGMGEPLANYARVLAAVQRITARPPSGFGISARAVTVSTVGLAPAIRNLADARLGVTLALSLHAPDDGLRDTLVPVNNRWRISEALDAARYYANVTGRRVSIEYALIRDVNDQPWRADLLGKRLHRVLGPLAHVNLIPLNPTPGSDWDASPKPVEREFVKRVRAKGVSCTVRDTRGREISAACGQLAAVGG</sequence>
<name>RLMN_MYCTU</name>
<feature type="chain" id="PRO_0000171927" description="Probable dual-specificity RNA methyltransferase RlmN">
    <location>
        <begin position="1"/>
        <end position="364"/>
    </location>
</feature>
<feature type="domain" description="Radical SAM core" evidence="2">
    <location>
        <begin position="112"/>
        <end position="350"/>
    </location>
</feature>
<feature type="active site" description="Proton acceptor" evidence="1">
    <location>
        <position position="106"/>
    </location>
</feature>
<feature type="active site" description="S-methylcysteine intermediate" evidence="1">
    <location>
        <position position="356"/>
    </location>
</feature>
<feature type="binding site" evidence="1">
    <location>
        <position position="126"/>
    </location>
    <ligand>
        <name>[4Fe-4S] cluster</name>
        <dbReference type="ChEBI" id="CHEBI:49883"/>
        <note>4Fe-4S-S-AdoMet</note>
    </ligand>
</feature>
<feature type="binding site" evidence="1">
    <location>
        <position position="130"/>
    </location>
    <ligand>
        <name>[4Fe-4S] cluster</name>
        <dbReference type="ChEBI" id="CHEBI:49883"/>
        <note>4Fe-4S-S-AdoMet</note>
    </ligand>
</feature>
<feature type="binding site" evidence="1">
    <location>
        <position position="133"/>
    </location>
    <ligand>
        <name>[4Fe-4S] cluster</name>
        <dbReference type="ChEBI" id="CHEBI:49883"/>
        <note>4Fe-4S-S-AdoMet</note>
    </ligand>
</feature>
<feature type="binding site" evidence="1">
    <location>
        <begin position="177"/>
        <end position="178"/>
    </location>
    <ligand>
        <name>S-adenosyl-L-methionine</name>
        <dbReference type="ChEBI" id="CHEBI:59789"/>
    </ligand>
</feature>
<feature type="binding site" evidence="1">
    <location>
        <position position="211"/>
    </location>
    <ligand>
        <name>S-adenosyl-L-methionine</name>
        <dbReference type="ChEBI" id="CHEBI:59789"/>
    </ligand>
</feature>
<feature type="binding site" evidence="1">
    <location>
        <begin position="234"/>
        <end position="236"/>
    </location>
    <ligand>
        <name>S-adenosyl-L-methionine</name>
        <dbReference type="ChEBI" id="CHEBI:59789"/>
    </ligand>
</feature>
<feature type="binding site" evidence="1">
    <location>
        <position position="313"/>
    </location>
    <ligand>
        <name>S-adenosyl-L-methionine</name>
        <dbReference type="ChEBI" id="CHEBI:59789"/>
    </ligand>
</feature>
<feature type="disulfide bond" description="(transient)" evidence="1">
    <location>
        <begin position="119"/>
        <end position="356"/>
    </location>
</feature>
<proteinExistence type="inferred from homology"/>
<accession>P9WH15</accession>
<accession>L0TB52</accession>
<accession>L0TDU2</accession>
<accession>P0A644</accession>
<accession>Q10805</accession>
<accession>Q10806</accession>